<name>MUTL_WOLTR</name>
<proteinExistence type="inferred from homology"/>
<accession>Q5GSP0</accession>
<keyword id="KW-0227">DNA damage</keyword>
<keyword id="KW-0234">DNA repair</keyword>
<keyword id="KW-1185">Reference proteome</keyword>
<organism>
    <name type="scientific">Wolbachia sp. subsp. Brugia malayi (strain TRS)</name>
    <dbReference type="NCBI Taxonomy" id="292805"/>
    <lineage>
        <taxon>Bacteria</taxon>
        <taxon>Pseudomonadati</taxon>
        <taxon>Pseudomonadota</taxon>
        <taxon>Alphaproteobacteria</taxon>
        <taxon>Rickettsiales</taxon>
        <taxon>Anaplasmataceae</taxon>
        <taxon>Wolbachieae</taxon>
        <taxon>Wolbachia</taxon>
    </lineage>
</organism>
<protein>
    <recommendedName>
        <fullName evidence="1">DNA mismatch repair protein MutL</fullName>
    </recommendedName>
</protein>
<reference key="1">
    <citation type="journal article" date="2005" name="PLoS Biol.">
        <title>The Wolbachia genome of Brugia malayi: endosymbiont evolution within a human pathogenic nematode.</title>
        <authorList>
            <person name="Foster J."/>
            <person name="Ganatra M."/>
            <person name="Kamal I."/>
            <person name="Ware J."/>
            <person name="Makarova K."/>
            <person name="Ivanova N."/>
            <person name="Bhattacharyya A."/>
            <person name="Kapatral V."/>
            <person name="Kumar S."/>
            <person name="Posfai J."/>
            <person name="Vincze T."/>
            <person name="Ingram J."/>
            <person name="Moran L."/>
            <person name="Lapidus A."/>
            <person name="Omelchenko M."/>
            <person name="Kyrpides N."/>
            <person name="Ghedin E."/>
            <person name="Wang S."/>
            <person name="Goltsman E."/>
            <person name="Joukov V."/>
            <person name="Ostrovskaya O."/>
            <person name="Tsukerman K."/>
            <person name="Mazur M."/>
            <person name="Comb D."/>
            <person name="Koonin E."/>
            <person name="Slatko B."/>
        </authorList>
    </citation>
    <scope>NUCLEOTIDE SEQUENCE [LARGE SCALE GENOMIC DNA]</scope>
    <source>
        <strain>TRS</strain>
    </source>
</reference>
<feature type="chain" id="PRO_1000010100" description="DNA mismatch repair protein MutL">
    <location>
        <begin position="1"/>
        <end position="628"/>
    </location>
</feature>
<feature type="region of interest" description="Disordered" evidence="2">
    <location>
        <begin position="350"/>
        <end position="402"/>
    </location>
</feature>
<feature type="compositionally biased region" description="Polar residues" evidence="2">
    <location>
        <begin position="356"/>
        <end position="368"/>
    </location>
</feature>
<feature type="compositionally biased region" description="Basic and acidic residues" evidence="2">
    <location>
        <begin position="369"/>
        <end position="393"/>
    </location>
</feature>
<gene>
    <name evidence="1" type="primary">mutL</name>
    <name type="ordered locus">Wbm0396</name>
</gene>
<evidence type="ECO:0000255" key="1">
    <source>
        <dbReference type="HAMAP-Rule" id="MF_00149"/>
    </source>
</evidence>
<evidence type="ECO:0000256" key="2">
    <source>
        <dbReference type="SAM" id="MobiDB-lite"/>
    </source>
</evidence>
<comment type="function">
    <text evidence="1">This protein is involved in the repair of mismatches in DNA. It is required for dam-dependent methyl-directed DNA mismatch repair. May act as a 'molecular matchmaker', a protein that promotes the formation of a stable complex between two or more DNA-binding proteins in an ATP-dependent manner without itself being part of a final effector complex.</text>
</comment>
<comment type="similarity">
    <text evidence="1">Belongs to the DNA mismatch repair MutL/HexB family.</text>
</comment>
<sequence length="628" mass="70803">MAIILLDTKTINRIAAGEVIERPASVVKELVENAIDAGSSEIEIKIESGGCNLITITDDGGGIEKSDLELAFMRHATSKLSDSELIEIKHLGFRGEALSSIAAVSRIKLSSKANGASEAWSISYEGGEKIGELIPYSLPQGTHIEVRDLFFATPNRLKFLKTERAEIQSIVDIVNNLAMINYSIGFTLTSGSKKPLKYAKQTSLFSRLCEVEEEFQDNSLEINEEEDGVRLTGHICKPTVNRGKSDMIYTFVNGRPIKDNLLVSAIRYAYHDFIPSNRYPFATLHLEIPYDQIDVNVHPNKSEVRFQNKRLIYEIVRRGLIKALSTRTGNSAVSNIDRSRCQGIGKETSGLPFDVSESQGNDNHINNGKSRETKSERELYERRPNPFENRLMKESNSPSVGKKDLSERSVLFDSGIQKSLSQAKTVVLEREQIDLIENHPLGFARCQVYNTYIIAEARGKLIIVDQHAAHERLVYECLKQKSSIKRQKLLLSEVVEIKNQAGMEMVEVYKDKLFEMGFDIQINSENKVIVKEIPAILGTIDVKEMLIDIVDRLMEIEDMLPIEDKVNKILATIACHGSIRAGRTMKLEEMNVLLRQMEETPYSGQCNHGRPTHIEMKLSDIEKLFERR</sequence>
<dbReference type="EMBL" id="AE017321">
    <property type="protein sequence ID" value="AAW70984.1"/>
    <property type="molecule type" value="Genomic_DNA"/>
</dbReference>
<dbReference type="RefSeq" id="WP_011256594.1">
    <property type="nucleotide sequence ID" value="NC_006833.1"/>
</dbReference>
<dbReference type="SMR" id="Q5GSP0"/>
<dbReference type="STRING" id="292805.Wbm0396"/>
<dbReference type="KEGG" id="wbm:Wbm0396"/>
<dbReference type="eggNOG" id="COG0323">
    <property type="taxonomic scope" value="Bacteria"/>
</dbReference>
<dbReference type="HOGENOM" id="CLU_004131_4_2_5"/>
<dbReference type="Proteomes" id="UP000000534">
    <property type="component" value="Chromosome"/>
</dbReference>
<dbReference type="GO" id="GO:0032300">
    <property type="term" value="C:mismatch repair complex"/>
    <property type="evidence" value="ECO:0007669"/>
    <property type="project" value="InterPro"/>
</dbReference>
<dbReference type="GO" id="GO:0005524">
    <property type="term" value="F:ATP binding"/>
    <property type="evidence" value="ECO:0007669"/>
    <property type="project" value="InterPro"/>
</dbReference>
<dbReference type="GO" id="GO:0016887">
    <property type="term" value="F:ATP hydrolysis activity"/>
    <property type="evidence" value="ECO:0007669"/>
    <property type="project" value="InterPro"/>
</dbReference>
<dbReference type="GO" id="GO:0140664">
    <property type="term" value="F:ATP-dependent DNA damage sensor activity"/>
    <property type="evidence" value="ECO:0007669"/>
    <property type="project" value="InterPro"/>
</dbReference>
<dbReference type="GO" id="GO:0030983">
    <property type="term" value="F:mismatched DNA binding"/>
    <property type="evidence" value="ECO:0007669"/>
    <property type="project" value="InterPro"/>
</dbReference>
<dbReference type="GO" id="GO:0006298">
    <property type="term" value="P:mismatch repair"/>
    <property type="evidence" value="ECO:0007669"/>
    <property type="project" value="UniProtKB-UniRule"/>
</dbReference>
<dbReference type="CDD" id="cd16926">
    <property type="entry name" value="HATPase_MutL-MLH-PMS-like"/>
    <property type="match status" value="1"/>
</dbReference>
<dbReference type="CDD" id="cd00782">
    <property type="entry name" value="MutL_Trans"/>
    <property type="match status" value="1"/>
</dbReference>
<dbReference type="FunFam" id="3.30.565.10:FF:000003">
    <property type="entry name" value="DNA mismatch repair endonuclease MutL"/>
    <property type="match status" value="1"/>
</dbReference>
<dbReference type="Gene3D" id="3.30.230.10">
    <property type="match status" value="1"/>
</dbReference>
<dbReference type="Gene3D" id="3.30.565.10">
    <property type="entry name" value="Histidine kinase-like ATPase, C-terminal domain"/>
    <property type="match status" value="1"/>
</dbReference>
<dbReference type="Gene3D" id="3.30.1540.20">
    <property type="entry name" value="MutL, C-terminal domain, dimerisation subdomain"/>
    <property type="match status" value="1"/>
</dbReference>
<dbReference type="Gene3D" id="3.30.1370.100">
    <property type="entry name" value="MutL, C-terminal domain, regulatory subdomain"/>
    <property type="match status" value="1"/>
</dbReference>
<dbReference type="HAMAP" id="MF_00149">
    <property type="entry name" value="DNA_mis_repair"/>
    <property type="match status" value="1"/>
</dbReference>
<dbReference type="InterPro" id="IPR014762">
    <property type="entry name" value="DNA_mismatch_repair_CS"/>
</dbReference>
<dbReference type="InterPro" id="IPR020667">
    <property type="entry name" value="DNA_mismatch_repair_MutL"/>
</dbReference>
<dbReference type="InterPro" id="IPR013507">
    <property type="entry name" value="DNA_mismatch_S5_2-like"/>
</dbReference>
<dbReference type="InterPro" id="IPR036890">
    <property type="entry name" value="HATPase_C_sf"/>
</dbReference>
<dbReference type="InterPro" id="IPR002099">
    <property type="entry name" value="MutL/Mlh/PMS"/>
</dbReference>
<dbReference type="InterPro" id="IPR038973">
    <property type="entry name" value="MutL/Mlh/Pms-like"/>
</dbReference>
<dbReference type="InterPro" id="IPR014790">
    <property type="entry name" value="MutL_C"/>
</dbReference>
<dbReference type="InterPro" id="IPR042120">
    <property type="entry name" value="MutL_C_dimsub"/>
</dbReference>
<dbReference type="InterPro" id="IPR042121">
    <property type="entry name" value="MutL_C_regsub"/>
</dbReference>
<dbReference type="InterPro" id="IPR037198">
    <property type="entry name" value="MutL_C_sf"/>
</dbReference>
<dbReference type="InterPro" id="IPR020568">
    <property type="entry name" value="Ribosomal_Su5_D2-typ_SF"/>
</dbReference>
<dbReference type="InterPro" id="IPR014721">
    <property type="entry name" value="Ribsml_uS5_D2-typ_fold_subgr"/>
</dbReference>
<dbReference type="NCBIfam" id="TIGR00585">
    <property type="entry name" value="mutl"/>
    <property type="match status" value="1"/>
</dbReference>
<dbReference type="NCBIfam" id="NF000952">
    <property type="entry name" value="PRK00095.2-2"/>
    <property type="match status" value="1"/>
</dbReference>
<dbReference type="PANTHER" id="PTHR10073">
    <property type="entry name" value="DNA MISMATCH REPAIR PROTEIN MLH, PMS, MUTL"/>
    <property type="match status" value="1"/>
</dbReference>
<dbReference type="PANTHER" id="PTHR10073:SF12">
    <property type="entry name" value="DNA MISMATCH REPAIR PROTEIN MLH1"/>
    <property type="match status" value="1"/>
</dbReference>
<dbReference type="Pfam" id="PF01119">
    <property type="entry name" value="DNA_mis_repair"/>
    <property type="match status" value="1"/>
</dbReference>
<dbReference type="Pfam" id="PF13589">
    <property type="entry name" value="HATPase_c_3"/>
    <property type="match status" value="1"/>
</dbReference>
<dbReference type="Pfam" id="PF08676">
    <property type="entry name" value="MutL_C"/>
    <property type="match status" value="1"/>
</dbReference>
<dbReference type="SMART" id="SM01340">
    <property type="entry name" value="DNA_mis_repair"/>
    <property type="match status" value="1"/>
</dbReference>
<dbReference type="SMART" id="SM00853">
    <property type="entry name" value="MutL_C"/>
    <property type="match status" value="1"/>
</dbReference>
<dbReference type="SUPFAM" id="SSF55874">
    <property type="entry name" value="ATPase domain of HSP90 chaperone/DNA topoisomerase II/histidine kinase"/>
    <property type="match status" value="1"/>
</dbReference>
<dbReference type="SUPFAM" id="SSF118116">
    <property type="entry name" value="DNA mismatch repair protein MutL"/>
    <property type="match status" value="1"/>
</dbReference>
<dbReference type="SUPFAM" id="SSF54211">
    <property type="entry name" value="Ribosomal protein S5 domain 2-like"/>
    <property type="match status" value="1"/>
</dbReference>
<dbReference type="PROSITE" id="PS00058">
    <property type="entry name" value="DNA_MISMATCH_REPAIR_1"/>
    <property type="match status" value="1"/>
</dbReference>